<dbReference type="EC" id="3.1.1.29" evidence="1"/>
<dbReference type="EMBL" id="CP001074">
    <property type="protein sequence ID" value="ACE92135.1"/>
    <property type="molecule type" value="Genomic_DNA"/>
</dbReference>
<dbReference type="SMR" id="B3PV10"/>
<dbReference type="KEGG" id="rec:RHECIAT_CH0003187"/>
<dbReference type="eggNOG" id="COG0193">
    <property type="taxonomic scope" value="Bacteria"/>
</dbReference>
<dbReference type="HOGENOM" id="CLU_062456_1_1_5"/>
<dbReference type="Proteomes" id="UP000008817">
    <property type="component" value="Chromosome"/>
</dbReference>
<dbReference type="GO" id="GO:0005737">
    <property type="term" value="C:cytoplasm"/>
    <property type="evidence" value="ECO:0007669"/>
    <property type="project" value="UniProtKB-SubCell"/>
</dbReference>
<dbReference type="GO" id="GO:0004045">
    <property type="term" value="F:peptidyl-tRNA hydrolase activity"/>
    <property type="evidence" value="ECO:0007669"/>
    <property type="project" value="UniProtKB-UniRule"/>
</dbReference>
<dbReference type="GO" id="GO:0000049">
    <property type="term" value="F:tRNA binding"/>
    <property type="evidence" value="ECO:0007669"/>
    <property type="project" value="UniProtKB-UniRule"/>
</dbReference>
<dbReference type="GO" id="GO:0006515">
    <property type="term" value="P:protein quality control for misfolded or incompletely synthesized proteins"/>
    <property type="evidence" value="ECO:0007669"/>
    <property type="project" value="UniProtKB-UniRule"/>
</dbReference>
<dbReference type="GO" id="GO:0072344">
    <property type="term" value="P:rescue of stalled ribosome"/>
    <property type="evidence" value="ECO:0007669"/>
    <property type="project" value="UniProtKB-UniRule"/>
</dbReference>
<dbReference type="CDD" id="cd00462">
    <property type="entry name" value="PTH"/>
    <property type="match status" value="1"/>
</dbReference>
<dbReference type="FunFam" id="3.40.50.1470:FF:000001">
    <property type="entry name" value="Peptidyl-tRNA hydrolase"/>
    <property type="match status" value="1"/>
</dbReference>
<dbReference type="Gene3D" id="3.40.50.1470">
    <property type="entry name" value="Peptidyl-tRNA hydrolase"/>
    <property type="match status" value="1"/>
</dbReference>
<dbReference type="HAMAP" id="MF_00083">
    <property type="entry name" value="Pept_tRNA_hydro_bact"/>
    <property type="match status" value="1"/>
</dbReference>
<dbReference type="InterPro" id="IPR001328">
    <property type="entry name" value="Pept_tRNA_hydro"/>
</dbReference>
<dbReference type="InterPro" id="IPR018171">
    <property type="entry name" value="Pept_tRNA_hydro_CS"/>
</dbReference>
<dbReference type="InterPro" id="IPR036416">
    <property type="entry name" value="Pept_tRNA_hydro_sf"/>
</dbReference>
<dbReference type="NCBIfam" id="TIGR00447">
    <property type="entry name" value="pth"/>
    <property type="match status" value="1"/>
</dbReference>
<dbReference type="PANTHER" id="PTHR17224">
    <property type="entry name" value="PEPTIDYL-TRNA HYDROLASE"/>
    <property type="match status" value="1"/>
</dbReference>
<dbReference type="PANTHER" id="PTHR17224:SF1">
    <property type="entry name" value="PEPTIDYL-TRNA HYDROLASE"/>
    <property type="match status" value="1"/>
</dbReference>
<dbReference type="Pfam" id="PF01195">
    <property type="entry name" value="Pept_tRNA_hydro"/>
    <property type="match status" value="1"/>
</dbReference>
<dbReference type="SUPFAM" id="SSF53178">
    <property type="entry name" value="Peptidyl-tRNA hydrolase-like"/>
    <property type="match status" value="1"/>
</dbReference>
<dbReference type="PROSITE" id="PS01195">
    <property type="entry name" value="PEPT_TRNA_HYDROL_1"/>
    <property type="match status" value="1"/>
</dbReference>
<dbReference type="PROSITE" id="PS01196">
    <property type="entry name" value="PEPT_TRNA_HYDROL_2"/>
    <property type="match status" value="1"/>
</dbReference>
<accession>B3PV10</accession>
<sequence length="243" mass="26534">MLIIAGLGNPGAKYAGNRHNIGFMAVDAIHRRQSFSPWSKKFKAEIAEGELGGEKVLLIKPQTYMNLSGEAVGEAMRFYKLQPADLVAIYDELDLSPGKARLKTGGGHGGHNGIRSLDAHCGKEYRRLRLGIGHPGIKEMVQNHVLGDFAKADSDWLEPLLETLADNAEMLVRNEDSQLMNKIALALGGKAEEEKPRKEGKDGEKKPAGQSHIRQARSSNQPKLPATGPMAEMLKKMFGNKGE</sequence>
<feature type="chain" id="PRO_1000092974" description="Peptidyl-tRNA hydrolase">
    <location>
        <begin position="1"/>
        <end position="243"/>
    </location>
</feature>
<feature type="region of interest" description="Disordered" evidence="2">
    <location>
        <begin position="190"/>
        <end position="243"/>
    </location>
</feature>
<feature type="compositionally biased region" description="Basic and acidic residues" evidence="2">
    <location>
        <begin position="190"/>
        <end position="207"/>
    </location>
</feature>
<feature type="compositionally biased region" description="Polar residues" evidence="2">
    <location>
        <begin position="212"/>
        <end position="222"/>
    </location>
</feature>
<feature type="active site" description="Proton acceptor" evidence="1">
    <location>
        <position position="19"/>
    </location>
</feature>
<feature type="binding site" evidence="1">
    <location>
        <position position="14"/>
    </location>
    <ligand>
        <name>tRNA</name>
        <dbReference type="ChEBI" id="CHEBI:17843"/>
    </ligand>
</feature>
<feature type="binding site" evidence="1">
    <location>
        <position position="64"/>
    </location>
    <ligand>
        <name>tRNA</name>
        <dbReference type="ChEBI" id="CHEBI:17843"/>
    </ligand>
</feature>
<feature type="binding site" evidence="1">
    <location>
        <position position="66"/>
    </location>
    <ligand>
        <name>tRNA</name>
        <dbReference type="ChEBI" id="CHEBI:17843"/>
    </ligand>
</feature>
<feature type="binding site" evidence="1">
    <location>
        <position position="112"/>
    </location>
    <ligand>
        <name>tRNA</name>
        <dbReference type="ChEBI" id="CHEBI:17843"/>
    </ligand>
</feature>
<feature type="site" description="Discriminates between blocked and unblocked aminoacyl-tRNA" evidence="1">
    <location>
        <position position="9"/>
    </location>
</feature>
<feature type="site" description="Stabilizes the basic form of H active site to accept a proton" evidence="1">
    <location>
        <position position="91"/>
    </location>
</feature>
<evidence type="ECO:0000255" key="1">
    <source>
        <dbReference type="HAMAP-Rule" id="MF_00083"/>
    </source>
</evidence>
<evidence type="ECO:0000256" key="2">
    <source>
        <dbReference type="SAM" id="MobiDB-lite"/>
    </source>
</evidence>
<reference key="1">
    <citation type="journal article" date="2010" name="Appl. Environ. Microbiol.">
        <title>Conserved symbiotic plasmid DNA sequences in the multireplicon pangenomic structure of Rhizobium etli.</title>
        <authorList>
            <person name="Gonzalez V."/>
            <person name="Acosta J.L."/>
            <person name="Santamaria R.I."/>
            <person name="Bustos P."/>
            <person name="Fernandez J.L."/>
            <person name="Hernandez Gonzalez I.L."/>
            <person name="Diaz R."/>
            <person name="Flores M."/>
            <person name="Palacios R."/>
            <person name="Mora J."/>
            <person name="Davila G."/>
        </authorList>
    </citation>
    <scope>NUCLEOTIDE SEQUENCE [LARGE SCALE GENOMIC DNA]</scope>
    <source>
        <strain>CIAT 652</strain>
    </source>
</reference>
<keyword id="KW-0963">Cytoplasm</keyword>
<keyword id="KW-0378">Hydrolase</keyword>
<keyword id="KW-0694">RNA-binding</keyword>
<keyword id="KW-0820">tRNA-binding</keyword>
<proteinExistence type="inferred from homology"/>
<gene>
    <name evidence="1" type="primary">pth</name>
    <name type="ordered locus">RHECIAT_CH0003187</name>
</gene>
<organism>
    <name type="scientific">Rhizobium etli (strain CIAT 652)</name>
    <dbReference type="NCBI Taxonomy" id="491916"/>
    <lineage>
        <taxon>Bacteria</taxon>
        <taxon>Pseudomonadati</taxon>
        <taxon>Pseudomonadota</taxon>
        <taxon>Alphaproteobacteria</taxon>
        <taxon>Hyphomicrobiales</taxon>
        <taxon>Rhizobiaceae</taxon>
        <taxon>Rhizobium/Agrobacterium group</taxon>
        <taxon>Rhizobium</taxon>
    </lineage>
</organism>
<name>PTH_RHIE6</name>
<protein>
    <recommendedName>
        <fullName evidence="1">Peptidyl-tRNA hydrolase</fullName>
        <shortName evidence="1">Pth</shortName>
        <ecNumber evidence="1">3.1.1.29</ecNumber>
    </recommendedName>
</protein>
<comment type="function">
    <text evidence="1">Hydrolyzes ribosome-free peptidyl-tRNAs (with 1 or more amino acids incorporated), which drop off the ribosome during protein synthesis, or as a result of ribosome stalling.</text>
</comment>
<comment type="function">
    <text evidence="1">Catalyzes the release of premature peptidyl moieties from peptidyl-tRNA molecules trapped in stalled 50S ribosomal subunits, and thus maintains levels of free tRNAs and 50S ribosomes.</text>
</comment>
<comment type="catalytic activity">
    <reaction evidence="1">
        <text>an N-acyl-L-alpha-aminoacyl-tRNA + H2O = an N-acyl-L-amino acid + a tRNA + H(+)</text>
        <dbReference type="Rhea" id="RHEA:54448"/>
        <dbReference type="Rhea" id="RHEA-COMP:10123"/>
        <dbReference type="Rhea" id="RHEA-COMP:13883"/>
        <dbReference type="ChEBI" id="CHEBI:15377"/>
        <dbReference type="ChEBI" id="CHEBI:15378"/>
        <dbReference type="ChEBI" id="CHEBI:59874"/>
        <dbReference type="ChEBI" id="CHEBI:78442"/>
        <dbReference type="ChEBI" id="CHEBI:138191"/>
        <dbReference type="EC" id="3.1.1.29"/>
    </reaction>
</comment>
<comment type="subunit">
    <text evidence="1">Monomer.</text>
</comment>
<comment type="subcellular location">
    <subcellularLocation>
        <location evidence="1">Cytoplasm</location>
    </subcellularLocation>
</comment>
<comment type="similarity">
    <text evidence="1">Belongs to the PTH family.</text>
</comment>